<comment type="function">
    <text evidence="3 4">Mediates the post-translational oxidative deamination of lysine residues on target proteins leading to the formation of deaminated lysine (allysine). Acts as a transcription corepressor and specifically mediates deamination of trimethylated 'Lys-4' of histone H3 (H3K4me3), a specific tag for epigenetic transcriptional activation. Shows no activity against histone H3 when it is trimethylated on 'Lys-9' (H3K9me3) or 'Lys-27' (H3K27me3) or when 'Lys-4' is monomethylated (H3K4me1) or dimethylated (H3K4me2). Also mediates deamination of methylated TAF10, a member of the transcription factor IID (TFIID) complex, which induces release of TAF10 from promoters, leading to inhibition of TFIID-dependent transcription. LOXL2-mediated deamination of TAF10 results in transcriptional repression of genes required for embryonic stem cell pluripotency including POU5F1/OCT4, NANOG, KLF4 and SOX2. Involved in epithelial to mesenchymal transition (EMT) via interaction with SNAI1 and participates in repression of E-cadherin CDH1, probably by mediating deamination of histone H3. During EMT, involved with SNAI1 in negatively regulating pericentromeric heterochromatin transcription. SNAI1 recruits LOXL2 to pericentromeric regions to oxidize histone H3 and repress transcription which leads to release of heterochromatin component CBX5/HP1A, enabling chromatin reorganization and acquisition of mesenchymal traits. Interacts with the endoplasmic reticulum protein HSPA5 which activates the IRE1-XBP1 pathway of the unfolded protein response, leading to expression of several transcription factors involved in EMT and subsequent EMT induction. When secreted into the extracellular matrix, promotes cross-linking of extracellular matrix proteins by mediating oxidative deamination of peptidyl lysine residues in precursors to fibrous collagen and elastin. Acts as a regulator of sprouting angiogenesis, probably via collagen IV scaffolding. Acts as a regulator of chondrocyte differentiation, probably by regulating expression of factors that control chondrocyte differentiation.</text>
</comment>
<comment type="catalytic activity">
    <reaction evidence="4">
        <text>L-lysyl-[protein] + O2 + H2O = (S)-2-amino-6-oxohexanoyl-[protein] + H2O2 + NH4(+)</text>
        <dbReference type="Rhea" id="RHEA:24544"/>
        <dbReference type="Rhea" id="RHEA-COMP:9752"/>
        <dbReference type="Rhea" id="RHEA-COMP:12448"/>
        <dbReference type="ChEBI" id="CHEBI:15377"/>
        <dbReference type="ChEBI" id="CHEBI:15379"/>
        <dbReference type="ChEBI" id="CHEBI:16240"/>
        <dbReference type="ChEBI" id="CHEBI:28938"/>
        <dbReference type="ChEBI" id="CHEBI:29969"/>
        <dbReference type="ChEBI" id="CHEBI:131803"/>
        <dbReference type="EC" id="1.4.3.13"/>
    </reaction>
</comment>
<comment type="cofactor">
    <cofactor evidence="4">
        <name>Cu cation</name>
        <dbReference type="ChEBI" id="CHEBI:23378"/>
    </cofactor>
</comment>
<comment type="cofactor">
    <cofactor evidence="4">
        <name>lysine tyrosylquinone residue</name>
        <dbReference type="ChEBI" id="CHEBI:20489"/>
    </cofactor>
    <text evidence="2 4">Contains 1 lysine tyrosylquinone.</text>
</comment>
<comment type="subcellular location">
    <subcellularLocation>
        <location evidence="4">Secreted</location>
        <location evidence="4">Extracellular space</location>
        <location evidence="4">Extracellular matrix</location>
        <location evidence="4">Basement membrane</location>
    </subcellularLocation>
    <subcellularLocation>
        <location evidence="4">Nucleus</location>
    </subcellularLocation>
    <subcellularLocation>
        <location evidence="4">Chromosome</location>
    </subcellularLocation>
    <subcellularLocation>
        <location evidence="4">Endoplasmic reticulum</location>
    </subcellularLocation>
    <text evidence="4">Associated with chromatin. It is unclear how LOXL2 is nuclear as it contains a signal sequence and has been shown to be secreted. However, a number of reports confirm its intracellular location and its key role in transcription regulation.</text>
</comment>
<comment type="PTM">
    <text evidence="4">The lysine tyrosylquinone cross-link (LTQ) is generated by condensation of the epsilon-amino group of a lysine with a topaquinone produced by oxidation of tyrosine.</text>
</comment>
<comment type="similarity">
    <text evidence="7">Belongs to the lysyl oxidase family.</text>
</comment>
<proteinExistence type="inferred from homology"/>
<name>LOXL2_CHICK</name>
<accession>E1C3U7</accession>
<reference key="1">
    <citation type="journal article" date="2004" name="Nature">
        <title>Sequence and comparative analysis of the chicken genome provide unique perspectives on vertebrate evolution.</title>
        <authorList>
            <person name="Hillier L.W."/>
            <person name="Miller W."/>
            <person name="Birney E."/>
            <person name="Warren W."/>
            <person name="Hardison R.C."/>
            <person name="Ponting C.P."/>
            <person name="Bork P."/>
            <person name="Burt D.W."/>
            <person name="Groenen M.A.M."/>
            <person name="Delany M.E."/>
            <person name="Dodgson J.B."/>
            <person name="Chinwalla A.T."/>
            <person name="Cliften P.F."/>
            <person name="Clifton S.W."/>
            <person name="Delehaunty K.D."/>
            <person name="Fronick C."/>
            <person name="Fulton R.S."/>
            <person name="Graves T.A."/>
            <person name="Kremitzki C."/>
            <person name="Layman D."/>
            <person name="Magrini V."/>
            <person name="McPherson J.D."/>
            <person name="Miner T.L."/>
            <person name="Minx P."/>
            <person name="Nash W.E."/>
            <person name="Nhan M.N."/>
            <person name="Nelson J.O."/>
            <person name="Oddy L.G."/>
            <person name="Pohl C.S."/>
            <person name="Randall-Maher J."/>
            <person name="Smith S.M."/>
            <person name="Wallis J.W."/>
            <person name="Yang S.-P."/>
            <person name="Romanov M.N."/>
            <person name="Rondelli C.M."/>
            <person name="Paton B."/>
            <person name="Smith J."/>
            <person name="Morrice D."/>
            <person name="Daniels L."/>
            <person name="Tempest H.G."/>
            <person name="Robertson L."/>
            <person name="Masabanda J.S."/>
            <person name="Griffin D.K."/>
            <person name="Vignal A."/>
            <person name="Fillon V."/>
            <person name="Jacobbson L."/>
            <person name="Kerje S."/>
            <person name="Andersson L."/>
            <person name="Crooijmans R.P."/>
            <person name="Aerts J."/>
            <person name="van der Poel J.J."/>
            <person name="Ellegren H."/>
            <person name="Caldwell R.B."/>
            <person name="Hubbard S.J."/>
            <person name="Grafham D.V."/>
            <person name="Kierzek A.M."/>
            <person name="McLaren S.R."/>
            <person name="Overton I.M."/>
            <person name="Arakawa H."/>
            <person name="Beattie K.J."/>
            <person name="Bezzubov Y."/>
            <person name="Boardman P.E."/>
            <person name="Bonfield J.K."/>
            <person name="Croning M.D.R."/>
            <person name="Davies R.M."/>
            <person name="Francis M.D."/>
            <person name="Humphray S.J."/>
            <person name="Scott C.E."/>
            <person name="Taylor R.G."/>
            <person name="Tickle C."/>
            <person name="Brown W.R.A."/>
            <person name="Rogers J."/>
            <person name="Buerstedde J.-M."/>
            <person name="Wilson S.A."/>
            <person name="Stubbs L."/>
            <person name="Ovcharenko I."/>
            <person name="Gordon L."/>
            <person name="Lucas S."/>
            <person name="Miller M.M."/>
            <person name="Inoko H."/>
            <person name="Shiina T."/>
            <person name="Kaufman J."/>
            <person name="Salomonsen J."/>
            <person name="Skjoedt K."/>
            <person name="Wong G.K.-S."/>
            <person name="Wang J."/>
            <person name="Liu B."/>
            <person name="Wang J."/>
            <person name="Yu J."/>
            <person name="Yang H."/>
            <person name="Nefedov M."/>
            <person name="Koriabine M."/>
            <person name="Dejong P.J."/>
            <person name="Goodstadt L."/>
            <person name="Webber C."/>
            <person name="Dickens N.J."/>
            <person name="Letunic I."/>
            <person name="Suyama M."/>
            <person name="Torrents D."/>
            <person name="von Mering C."/>
            <person name="Zdobnov E.M."/>
            <person name="Makova K."/>
            <person name="Nekrutenko A."/>
            <person name="Elnitski L."/>
            <person name="Eswara P."/>
            <person name="King D.C."/>
            <person name="Yang S.-P."/>
            <person name="Tyekucheva S."/>
            <person name="Radakrishnan A."/>
            <person name="Harris R.S."/>
            <person name="Chiaromonte F."/>
            <person name="Taylor J."/>
            <person name="He J."/>
            <person name="Rijnkels M."/>
            <person name="Griffiths-Jones S."/>
            <person name="Ureta-Vidal A."/>
            <person name="Hoffman M.M."/>
            <person name="Severin J."/>
            <person name="Searle S.M.J."/>
            <person name="Law A.S."/>
            <person name="Speed D."/>
            <person name="Waddington D."/>
            <person name="Cheng Z."/>
            <person name="Tuzun E."/>
            <person name="Eichler E."/>
            <person name="Bao Z."/>
            <person name="Flicek P."/>
            <person name="Shteynberg D.D."/>
            <person name="Brent M.R."/>
            <person name="Bye J.M."/>
            <person name="Huckle E.J."/>
            <person name="Chatterji S."/>
            <person name="Dewey C."/>
            <person name="Pachter L."/>
            <person name="Kouranov A."/>
            <person name="Mourelatos Z."/>
            <person name="Hatzigeorgiou A.G."/>
            <person name="Paterson A.H."/>
            <person name="Ivarie R."/>
            <person name="Brandstrom M."/>
            <person name="Axelsson E."/>
            <person name="Backstrom N."/>
            <person name="Berlin S."/>
            <person name="Webster M.T."/>
            <person name="Pourquie O."/>
            <person name="Reymond A."/>
            <person name="Ucla C."/>
            <person name="Antonarakis S.E."/>
            <person name="Long M."/>
            <person name="Emerson J.J."/>
            <person name="Betran E."/>
            <person name="Dupanloup I."/>
            <person name="Kaessmann H."/>
            <person name="Hinrichs A.S."/>
            <person name="Bejerano G."/>
            <person name="Furey T.S."/>
            <person name="Harte R.A."/>
            <person name="Raney B."/>
            <person name="Siepel A."/>
            <person name="Kent W.J."/>
            <person name="Haussler D."/>
            <person name="Eyras E."/>
            <person name="Castelo R."/>
            <person name="Abril J.F."/>
            <person name="Castellano S."/>
            <person name="Camara F."/>
            <person name="Parra G."/>
            <person name="Guigo R."/>
            <person name="Bourque G."/>
            <person name="Tesler G."/>
            <person name="Pevzner P.A."/>
            <person name="Smit A."/>
            <person name="Fulton L.A."/>
            <person name="Mardis E.R."/>
            <person name="Wilson R.K."/>
        </authorList>
    </citation>
    <scope>NUCLEOTIDE SEQUENCE [LARGE SCALE GENOMIC DNA]</scope>
    <source>
        <strain>Red jungle fowl</strain>
    </source>
</reference>
<keyword id="KW-0084">Basement membrane</keyword>
<keyword id="KW-0106">Calcium</keyword>
<keyword id="KW-0156">Chromatin regulator</keyword>
<keyword id="KW-0158">Chromosome</keyword>
<keyword id="KW-0186">Copper</keyword>
<keyword id="KW-1015">Disulfide bond</keyword>
<keyword id="KW-0256">Endoplasmic reticulum</keyword>
<keyword id="KW-0272">Extracellular matrix</keyword>
<keyword id="KW-0325">Glycoprotein</keyword>
<keyword id="KW-0886">LTQ</keyword>
<keyword id="KW-0479">Metal-binding</keyword>
<keyword id="KW-0539">Nucleus</keyword>
<keyword id="KW-0560">Oxidoreductase</keyword>
<keyword id="KW-1185">Reference proteome</keyword>
<keyword id="KW-0677">Repeat</keyword>
<keyword id="KW-0678">Repressor</keyword>
<keyword id="KW-0964">Secreted</keyword>
<keyword id="KW-0732">Signal</keyword>
<keyword id="KW-0801">TPQ</keyword>
<keyword id="KW-0804">Transcription</keyword>
<keyword id="KW-0805">Transcription regulation</keyword>
<organism>
    <name type="scientific">Gallus gallus</name>
    <name type="common">Chicken</name>
    <dbReference type="NCBI Taxonomy" id="9031"/>
    <lineage>
        <taxon>Eukaryota</taxon>
        <taxon>Metazoa</taxon>
        <taxon>Chordata</taxon>
        <taxon>Craniata</taxon>
        <taxon>Vertebrata</taxon>
        <taxon>Euteleostomi</taxon>
        <taxon>Archelosauria</taxon>
        <taxon>Archosauria</taxon>
        <taxon>Dinosauria</taxon>
        <taxon>Saurischia</taxon>
        <taxon>Theropoda</taxon>
        <taxon>Coelurosauria</taxon>
        <taxon>Aves</taxon>
        <taxon>Neognathae</taxon>
        <taxon>Galloanserae</taxon>
        <taxon>Galliformes</taxon>
        <taxon>Phasianidae</taxon>
        <taxon>Phasianinae</taxon>
        <taxon>Gallus</taxon>
    </lineage>
</organism>
<protein>
    <recommendedName>
        <fullName>Lysyl oxidase homolog 2</fullName>
        <ecNumber evidence="4">1.4.3.13</ecNumber>
    </recommendedName>
    <alternativeName>
        <fullName>Lysyl oxidase-like protein 2</fullName>
    </alternativeName>
</protein>
<dbReference type="EC" id="1.4.3.13" evidence="4"/>
<dbReference type="EMBL" id="AADN02055455">
    <property type="status" value="NOT_ANNOTATED_CDS"/>
    <property type="molecule type" value="Genomic_DNA"/>
</dbReference>
<dbReference type="EMBL" id="AADN02055456">
    <property type="status" value="NOT_ANNOTATED_CDS"/>
    <property type="molecule type" value="Genomic_DNA"/>
</dbReference>
<dbReference type="EMBL" id="AADN02055457">
    <property type="status" value="NOT_ANNOTATED_CDS"/>
    <property type="molecule type" value="Genomic_DNA"/>
</dbReference>
<dbReference type="SMR" id="E1C3U7"/>
<dbReference type="FunCoup" id="E1C3U7">
    <property type="interactions" value="57"/>
</dbReference>
<dbReference type="STRING" id="9031.ENSGALP00000000547"/>
<dbReference type="GlyCosmos" id="E1C3U7">
    <property type="glycosylation" value="3 sites, No reported glycans"/>
</dbReference>
<dbReference type="GlyGen" id="E1C3U7">
    <property type="glycosylation" value="3 sites"/>
</dbReference>
<dbReference type="PaxDb" id="9031-ENSGALP00000000547"/>
<dbReference type="VEuPathDB" id="HostDB:geneid_419533"/>
<dbReference type="eggNOG" id="ENOG502QSX8">
    <property type="taxonomic scope" value="Eukaryota"/>
</dbReference>
<dbReference type="InParanoid" id="E1C3U7"/>
<dbReference type="OrthoDB" id="547291at2759"/>
<dbReference type="PhylomeDB" id="E1C3U7"/>
<dbReference type="TreeFam" id="TF326061"/>
<dbReference type="Proteomes" id="UP000000539">
    <property type="component" value="Unassembled WGS sequence"/>
</dbReference>
<dbReference type="GO" id="GO:0005604">
    <property type="term" value="C:basement membrane"/>
    <property type="evidence" value="ECO:0000250"/>
    <property type="project" value="UniProtKB"/>
</dbReference>
<dbReference type="GO" id="GO:0000785">
    <property type="term" value="C:chromatin"/>
    <property type="evidence" value="ECO:0000250"/>
    <property type="project" value="UniProtKB"/>
</dbReference>
<dbReference type="GO" id="GO:0062023">
    <property type="term" value="C:collagen-containing extracellular matrix"/>
    <property type="evidence" value="ECO:0000318"/>
    <property type="project" value="GO_Central"/>
</dbReference>
<dbReference type="GO" id="GO:0005783">
    <property type="term" value="C:endoplasmic reticulum"/>
    <property type="evidence" value="ECO:0000250"/>
    <property type="project" value="UniProtKB"/>
</dbReference>
<dbReference type="GO" id="GO:0005615">
    <property type="term" value="C:extracellular space"/>
    <property type="evidence" value="ECO:0000318"/>
    <property type="project" value="GO_Central"/>
</dbReference>
<dbReference type="GO" id="GO:0016020">
    <property type="term" value="C:membrane"/>
    <property type="evidence" value="ECO:0007669"/>
    <property type="project" value="InterPro"/>
</dbReference>
<dbReference type="GO" id="GO:0005634">
    <property type="term" value="C:nucleus"/>
    <property type="evidence" value="ECO:0000250"/>
    <property type="project" value="UniProtKB"/>
</dbReference>
<dbReference type="GO" id="GO:0005509">
    <property type="term" value="F:calcium ion binding"/>
    <property type="evidence" value="ECO:0000250"/>
    <property type="project" value="UniProtKB"/>
</dbReference>
<dbReference type="GO" id="GO:0005507">
    <property type="term" value="F:copper ion binding"/>
    <property type="evidence" value="ECO:0000250"/>
    <property type="project" value="UniProtKB"/>
</dbReference>
<dbReference type="GO" id="GO:0004720">
    <property type="term" value="F:protein-lysine 6-oxidase activity"/>
    <property type="evidence" value="ECO:0000250"/>
    <property type="project" value="UniProtKB"/>
</dbReference>
<dbReference type="GO" id="GO:0030199">
    <property type="term" value="P:collagen fibril organization"/>
    <property type="evidence" value="ECO:0000250"/>
    <property type="project" value="UniProtKB"/>
</dbReference>
<dbReference type="GO" id="GO:0043542">
    <property type="term" value="P:endothelial cell migration"/>
    <property type="evidence" value="ECO:0000250"/>
    <property type="project" value="UniProtKB"/>
</dbReference>
<dbReference type="GO" id="GO:0001935">
    <property type="term" value="P:endothelial cell proliferation"/>
    <property type="evidence" value="ECO:0000250"/>
    <property type="project" value="UniProtKB"/>
</dbReference>
<dbReference type="GO" id="GO:0001837">
    <property type="term" value="P:epithelial to mesenchymal transition"/>
    <property type="evidence" value="ECO:0000250"/>
    <property type="project" value="UniProtKB"/>
</dbReference>
<dbReference type="GO" id="GO:0070828">
    <property type="term" value="P:heterochromatin organization"/>
    <property type="evidence" value="ECO:0000250"/>
    <property type="project" value="UniProtKB"/>
</dbReference>
<dbReference type="GO" id="GO:0045892">
    <property type="term" value="P:negative regulation of DNA-templated transcription"/>
    <property type="evidence" value="ECO:0000250"/>
    <property type="project" value="UniProtKB"/>
</dbReference>
<dbReference type="GO" id="GO:1902455">
    <property type="term" value="P:negative regulation of stem cell population maintenance"/>
    <property type="evidence" value="ECO:0000250"/>
    <property type="project" value="UniProtKB"/>
</dbReference>
<dbReference type="GO" id="GO:0000122">
    <property type="term" value="P:negative regulation of transcription by RNA polymerase II"/>
    <property type="evidence" value="ECO:0000250"/>
    <property type="project" value="UniProtKB"/>
</dbReference>
<dbReference type="GO" id="GO:0018057">
    <property type="term" value="P:peptidyl-lysine oxidation"/>
    <property type="evidence" value="ECO:0000250"/>
    <property type="project" value="UniProtKB"/>
</dbReference>
<dbReference type="GO" id="GO:0032332">
    <property type="term" value="P:positive regulation of chondrocyte differentiation"/>
    <property type="evidence" value="ECO:0000250"/>
    <property type="project" value="UniProtKB"/>
</dbReference>
<dbReference type="GO" id="GO:0010718">
    <property type="term" value="P:positive regulation of epithelial to mesenchymal transition"/>
    <property type="evidence" value="ECO:0000250"/>
    <property type="project" value="UniProtKB"/>
</dbReference>
<dbReference type="GO" id="GO:0001666">
    <property type="term" value="P:response to hypoxia"/>
    <property type="evidence" value="ECO:0000250"/>
    <property type="project" value="UniProtKB"/>
</dbReference>
<dbReference type="GO" id="GO:0002040">
    <property type="term" value="P:sprouting angiogenesis"/>
    <property type="evidence" value="ECO:0000250"/>
    <property type="project" value="UniProtKB"/>
</dbReference>
<dbReference type="FunFam" id="3.10.250.10:FF:000001">
    <property type="entry name" value="Lysyl oxidase 4 isoform X1"/>
    <property type="match status" value="2"/>
</dbReference>
<dbReference type="FunFam" id="3.10.250.10:FF:000008">
    <property type="entry name" value="Lysyl oxidase homolog 2"/>
    <property type="match status" value="1"/>
</dbReference>
<dbReference type="FunFam" id="3.10.250.10:FF:000014">
    <property type="entry name" value="Lysyl oxidase homolog 2"/>
    <property type="match status" value="1"/>
</dbReference>
<dbReference type="Gene3D" id="3.10.250.10">
    <property type="entry name" value="SRCR-like domain"/>
    <property type="match status" value="4"/>
</dbReference>
<dbReference type="InterPro" id="IPR050912">
    <property type="entry name" value="LOX-like_protein"/>
</dbReference>
<dbReference type="InterPro" id="IPR001695">
    <property type="entry name" value="Lysyl_oxidase"/>
</dbReference>
<dbReference type="InterPro" id="IPR019828">
    <property type="entry name" value="Lysyl_oxidase_CS"/>
</dbReference>
<dbReference type="InterPro" id="IPR001190">
    <property type="entry name" value="SRCR"/>
</dbReference>
<dbReference type="InterPro" id="IPR036772">
    <property type="entry name" value="SRCR-like_dom_sf"/>
</dbReference>
<dbReference type="PANTHER" id="PTHR45817:SF1">
    <property type="entry name" value="LYSYL OXIDASE HOMOLOG 2"/>
    <property type="match status" value="1"/>
</dbReference>
<dbReference type="PANTHER" id="PTHR45817">
    <property type="entry name" value="LYSYL OXIDASE-LIKE-RELATED"/>
    <property type="match status" value="1"/>
</dbReference>
<dbReference type="Pfam" id="PF01186">
    <property type="entry name" value="Lysyl_oxidase"/>
    <property type="match status" value="1"/>
</dbReference>
<dbReference type="Pfam" id="PF00530">
    <property type="entry name" value="SRCR"/>
    <property type="match status" value="4"/>
</dbReference>
<dbReference type="PRINTS" id="PR00074">
    <property type="entry name" value="LYSYLOXIDASE"/>
</dbReference>
<dbReference type="PRINTS" id="PR00258">
    <property type="entry name" value="SPERACTRCPTR"/>
</dbReference>
<dbReference type="SMART" id="SM00202">
    <property type="entry name" value="SR"/>
    <property type="match status" value="4"/>
</dbReference>
<dbReference type="SUPFAM" id="SSF56487">
    <property type="entry name" value="SRCR-like"/>
    <property type="match status" value="4"/>
</dbReference>
<dbReference type="PROSITE" id="PS00926">
    <property type="entry name" value="LYSYL_OXIDASE"/>
    <property type="match status" value="1"/>
</dbReference>
<dbReference type="PROSITE" id="PS00420">
    <property type="entry name" value="SRCR_1"/>
    <property type="match status" value="2"/>
</dbReference>
<dbReference type="PROSITE" id="PS50287">
    <property type="entry name" value="SRCR_2"/>
    <property type="match status" value="4"/>
</dbReference>
<evidence type="ECO:0000250" key="1"/>
<evidence type="ECO:0000250" key="2">
    <source>
        <dbReference type="UniProtKB" id="P33072"/>
    </source>
</evidence>
<evidence type="ECO:0000250" key="3">
    <source>
        <dbReference type="UniProtKB" id="P58022"/>
    </source>
</evidence>
<evidence type="ECO:0000250" key="4">
    <source>
        <dbReference type="UniProtKB" id="Q9Y4K0"/>
    </source>
</evidence>
<evidence type="ECO:0000255" key="5"/>
<evidence type="ECO:0000255" key="6">
    <source>
        <dbReference type="PROSITE-ProRule" id="PRU00196"/>
    </source>
</evidence>
<evidence type="ECO:0000305" key="7"/>
<sequence length="774" mass="86965">MEGFLGFNHNHCFIVLFFVSLSLAQYEHWPYLPGYPEPPPQVYQPPRRPADVPKIQLRLAGQKRKHNEGRVEVFYNGEWGTVCDDDFSIHAAHVICRELGYVEAVSWLPSSKYGKGEGKIWMDNVHCNGKEATLAACTSNGWGVTDCKHTEDVGVVCSEKRIPGFKFDNSLLNQIENMNIQVEDIRIRPILATYRKRVPVTEGYVEVKDEGTWKQICDKHWTMKNSRVVCGMFGFPSERKYNTKVYKMFASRRKQHYWAYSMDCTGNEAHISSCKLGNHLNVDTEKNATCDNGMPAVASCVPGRAFAPSSHSGFRKAFRQEQPLVRLKGGANTGEGRVEVLKNGEWGTVCDDNWNLVSASVVCRELGFGSAKEAITGARLGQGMGPIHLNEIDCTGFEKSLTDCKFNMESQGCNHEEDAAVRCNVPAMGFQNQLRLVGGRNPYEGRVEVLAERNGTLRWGTVCSQGWSTVEAMVVCRQLGLGFASHAFQETWYWHGDVSADSVVMSGVKCSGTEMSLAHCRHDGADVSCPRGGGRFGAGVSCSETAPDLVLNAELVEQTAYLEDRPMFMLQCAQEENCLASSAVNTSVTSGYRRLLRFSSQIHNNGQSDFRPKNGRHAWVWHDCHRHYHSMEVFTHYDLLNLNGTKVAEGHKASFCLEDTECEADVQKQYECANFGEQGITVGCWDVYRHDIDCQWIDITDVPPGDYLFQVVINPNYEVAESDYSNNVMKCRSRYDGQRIWMYNSVHNGANQDGDTEERFSAYWKLGNSILFSR</sequence>
<feature type="signal peptide" evidence="5">
    <location>
        <begin position="1"/>
        <end position="24"/>
    </location>
</feature>
<feature type="chain" id="PRO_0000418003" description="Lysyl oxidase homolog 2">
    <location>
        <begin position="25"/>
        <end position="774"/>
    </location>
</feature>
<feature type="domain" description="SRCR 1" evidence="6">
    <location>
        <begin position="57"/>
        <end position="158"/>
    </location>
</feature>
<feature type="domain" description="SRCR 2" evidence="6">
    <location>
        <begin position="187"/>
        <end position="301"/>
    </location>
</feature>
<feature type="domain" description="SRCR 3" evidence="6">
    <location>
        <begin position="325"/>
        <end position="424"/>
    </location>
</feature>
<feature type="domain" description="SRCR 4" evidence="6">
    <location>
        <begin position="434"/>
        <end position="543"/>
    </location>
</feature>
<feature type="region of interest" description="Lysyl-oxidase like" evidence="1">
    <location>
        <begin position="547"/>
        <end position="751"/>
    </location>
</feature>
<feature type="binding site" evidence="4">
    <location>
        <position position="548"/>
    </location>
    <ligand>
        <name>Ca(2+)</name>
        <dbReference type="ChEBI" id="CHEBI:29108"/>
    </ligand>
</feature>
<feature type="binding site" evidence="4">
    <location>
        <position position="549"/>
    </location>
    <ligand>
        <name>Ca(2+)</name>
        <dbReference type="ChEBI" id="CHEBI:29108"/>
    </ligand>
</feature>
<feature type="binding site" evidence="4">
    <location>
        <position position="625"/>
    </location>
    <ligand>
        <name>Cu cation</name>
        <dbReference type="ChEBI" id="CHEBI:23378"/>
    </ligand>
</feature>
<feature type="binding site" evidence="4">
    <location>
        <position position="627"/>
    </location>
    <ligand>
        <name>Cu cation</name>
        <dbReference type="ChEBI" id="CHEBI:23378"/>
    </ligand>
</feature>
<feature type="binding site" evidence="4">
    <location>
        <position position="629"/>
    </location>
    <ligand>
        <name>Cu cation</name>
        <dbReference type="ChEBI" id="CHEBI:23378"/>
    </ligand>
</feature>
<feature type="binding site" evidence="4">
    <location>
        <position position="721"/>
    </location>
    <ligand>
        <name>Ca(2+)</name>
        <dbReference type="ChEBI" id="CHEBI:29108"/>
    </ligand>
</feature>
<feature type="binding site" evidence="4">
    <location>
        <position position="723"/>
    </location>
    <ligand>
        <name>Ca(2+)</name>
        <dbReference type="ChEBI" id="CHEBI:29108"/>
    </ligand>
</feature>
<feature type="binding site" evidence="4">
    <location>
        <position position="726"/>
    </location>
    <ligand>
        <name>Ca(2+)</name>
        <dbReference type="ChEBI" id="CHEBI:29108"/>
    </ligand>
</feature>
<feature type="binding site" evidence="4">
    <location>
        <position position="727"/>
    </location>
    <ligand>
        <name>Ca(2+)</name>
        <dbReference type="ChEBI" id="CHEBI:29108"/>
    </ligand>
</feature>
<feature type="modified residue" description="2',4',5'-topaquinone" evidence="2">
    <location>
        <position position="688"/>
    </location>
</feature>
<feature type="glycosylation site" description="N-linked (GlcNAc...) asparagine" evidence="5">
    <location>
        <position position="287"/>
    </location>
</feature>
<feature type="glycosylation site" description="N-linked (GlcNAc...) asparagine" evidence="5">
    <location>
        <position position="454"/>
    </location>
</feature>
<feature type="glycosylation site" description="N-linked (GlcNAc...) asparagine" evidence="5">
    <location>
        <position position="643"/>
    </location>
</feature>
<feature type="disulfide bond" evidence="6">
    <location>
        <begin position="83"/>
        <end position="147"/>
    </location>
</feature>
<feature type="disulfide bond" evidence="6">
    <location>
        <begin position="96"/>
        <end position="157"/>
    </location>
</feature>
<feature type="disulfide bond" evidence="6">
    <location>
        <begin position="127"/>
        <end position="137"/>
    </location>
</feature>
<feature type="disulfide bond" evidence="6">
    <location>
        <begin position="217"/>
        <end position="290"/>
    </location>
</feature>
<feature type="disulfide bond" evidence="6">
    <location>
        <begin position="230"/>
        <end position="300"/>
    </location>
</feature>
<feature type="disulfide bond" evidence="6">
    <location>
        <begin position="264"/>
        <end position="274"/>
    </location>
</feature>
<feature type="disulfide bond" evidence="6">
    <location>
        <begin position="350"/>
        <end position="413"/>
    </location>
</feature>
<feature type="disulfide bond" evidence="6">
    <location>
        <begin position="363"/>
        <end position="423"/>
    </location>
</feature>
<feature type="disulfide bond" evidence="6">
    <location>
        <begin position="394"/>
        <end position="404"/>
    </location>
</feature>
<feature type="disulfide bond" evidence="6">
    <location>
        <begin position="463"/>
        <end position="529"/>
    </location>
</feature>
<feature type="disulfide bond" evidence="6">
    <location>
        <begin position="476"/>
        <end position="542"/>
    </location>
</feature>
<feature type="disulfide bond" evidence="6">
    <location>
        <begin position="510"/>
        <end position="520"/>
    </location>
</feature>
<feature type="disulfide bond" evidence="4">
    <location>
        <begin position="572"/>
        <end position="624"/>
    </location>
</feature>
<feature type="disulfide bond" evidence="4">
    <location>
        <begin position="578"/>
        <end position="694"/>
    </location>
</feature>
<feature type="disulfide bond" evidence="4">
    <location>
        <begin position="656"/>
        <end position="672"/>
    </location>
</feature>
<feature type="disulfide bond" evidence="4">
    <location>
        <begin position="662"/>
        <end position="684"/>
    </location>
</feature>
<feature type="cross-link" description="Lysine tyrosylquinone (Lys-Tyr)" evidence="2">
    <location>
        <begin position="652"/>
        <end position="688"/>
    </location>
</feature>
<gene>
    <name type="primary">LOXL2</name>
</gene>